<keyword id="KW-0066">ATP synthesis</keyword>
<keyword id="KW-0067">ATP-binding</keyword>
<keyword id="KW-0139">CF(1)</keyword>
<keyword id="KW-0150">Chloroplast</keyword>
<keyword id="KW-0375">Hydrogen ion transport</keyword>
<keyword id="KW-0406">Ion transport</keyword>
<keyword id="KW-0472">Membrane</keyword>
<keyword id="KW-0547">Nucleotide-binding</keyword>
<keyword id="KW-0934">Plastid</keyword>
<keyword id="KW-0793">Thylakoid</keyword>
<keyword id="KW-1278">Translocase</keyword>
<keyword id="KW-0813">Transport</keyword>
<comment type="function">
    <text evidence="1">Produces ATP from ADP in the presence of a proton gradient across the membrane. The alpha chain is a regulatory subunit.</text>
</comment>
<comment type="catalytic activity">
    <reaction evidence="1">
        <text>ATP + H2O + 4 H(+)(in) = ADP + phosphate + 5 H(+)(out)</text>
        <dbReference type="Rhea" id="RHEA:57720"/>
        <dbReference type="ChEBI" id="CHEBI:15377"/>
        <dbReference type="ChEBI" id="CHEBI:15378"/>
        <dbReference type="ChEBI" id="CHEBI:30616"/>
        <dbReference type="ChEBI" id="CHEBI:43474"/>
        <dbReference type="ChEBI" id="CHEBI:456216"/>
        <dbReference type="EC" id="7.1.2.2"/>
    </reaction>
</comment>
<comment type="subunit">
    <text evidence="1">F-type ATPases have 2 components, CF(1) - the catalytic core - and CF(0) - the membrane proton channel. CF(1) has five subunits: alpha(3), beta(3), gamma(1), delta(1), epsilon(1). CF(0) has four main subunits: a, b, b' and c.</text>
</comment>
<comment type="subcellular location">
    <subcellularLocation>
        <location evidence="1">Plastid</location>
        <location evidence="1">Chloroplast thylakoid membrane</location>
        <topology evidence="1">Peripheral membrane protein</topology>
    </subcellularLocation>
</comment>
<comment type="similarity">
    <text evidence="1">Belongs to the ATPase alpha/beta chains family.</text>
</comment>
<sequence>MVTIRADEISNIIRERIEQYNREVKIVNTGTVLQVGDGIARIHGLDEVMAGELVEFEEGTIGIALNLESNNVGVVLMGDGLTIQEGSSVKATGRIAQIPVSEAYLGRVINALAKPIDGRGEISASESRLIESPAPGIISRRSVYEPLQTGLIAIDSMIPIGRGQRELIIGDRQTGKAAVATDTILNQKGQNVVCVYVAIGQKASSVAQVVTTFQERGAMEYTIVVAETADSPATLQYLAPYTGAALAEYFMYRERHTSIIYDDLSKQAQAYRQMSLLLRRPPGREAYPGDVFYLHSRLLERAAKLSSPLGEGSMTALPIVETQSGDVSAYIPTNVISITDGQIFLSADLFNAGIRPAINVGISVSRVGSAAQIKAMKQVAGKSKLELAQFAELEAFAQFASDLDKATQNQLARGQRLRELLKQSQAAPLTVEEQIVTIYTGANGYLDPLEIGQVKKFLVQLRTYLKTNKPQLQEIISSTKTFTEEVEALLKEAIPEQIELFLLQEQT</sequence>
<proteinExistence type="inferred from homology"/>
<accession>Q7YJY4</accession>
<reference key="1">
    <citation type="journal article" date="2003" name="Plant Syst. Evol.">
        <title>The chloroplast genome of the 'basal' angiosperm Calycanthus fertilis -- structural and phylogenetic analyses.</title>
        <authorList>
            <person name="Goremykin V."/>
            <person name="Hirsch-Ernst K.I."/>
            <person name="Woelfl S."/>
            <person name="Hellwig F.H."/>
        </authorList>
    </citation>
    <scope>NUCLEOTIDE SEQUENCE [LARGE SCALE GENOMIC DNA]</scope>
</reference>
<name>ATPA_CALFG</name>
<evidence type="ECO:0000255" key="1">
    <source>
        <dbReference type="HAMAP-Rule" id="MF_01346"/>
    </source>
</evidence>
<organism>
    <name type="scientific">Calycanthus floridus var. glaucus</name>
    <name type="common">Eastern sweetshrub</name>
    <name type="synonym">Calycanthus fertilis var. ferax</name>
    <dbReference type="NCBI Taxonomy" id="212734"/>
    <lineage>
        <taxon>Eukaryota</taxon>
        <taxon>Viridiplantae</taxon>
        <taxon>Streptophyta</taxon>
        <taxon>Embryophyta</taxon>
        <taxon>Tracheophyta</taxon>
        <taxon>Spermatophyta</taxon>
        <taxon>Magnoliopsida</taxon>
        <taxon>Magnoliidae</taxon>
        <taxon>Laurales</taxon>
        <taxon>Calycanthaceae</taxon>
        <taxon>Calycanthus</taxon>
    </lineage>
</organism>
<feature type="chain" id="PRO_0000238416" description="ATP synthase subunit alpha, chloroplastic">
    <location>
        <begin position="1"/>
        <end position="507"/>
    </location>
</feature>
<feature type="binding site" evidence="1">
    <location>
        <begin position="170"/>
        <end position="177"/>
    </location>
    <ligand>
        <name>ATP</name>
        <dbReference type="ChEBI" id="CHEBI:30616"/>
    </ligand>
</feature>
<feature type="site" description="Required for activity" evidence="1">
    <location>
        <position position="363"/>
    </location>
</feature>
<geneLocation type="chloroplast"/>
<dbReference type="EC" id="7.1.2.2" evidence="1"/>
<dbReference type="EMBL" id="AJ428413">
    <property type="protein sequence ID" value="CAD28706.1"/>
    <property type="molecule type" value="Genomic_DNA"/>
</dbReference>
<dbReference type="RefSeq" id="NP_862739.1">
    <property type="nucleotide sequence ID" value="NC_004993.1"/>
</dbReference>
<dbReference type="SMR" id="Q7YJY4"/>
<dbReference type="GeneID" id="2597974"/>
<dbReference type="GO" id="GO:0009535">
    <property type="term" value="C:chloroplast thylakoid membrane"/>
    <property type="evidence" value="ECO:0007669"/>
    <property type="project" value="UniProtKB-SubCell"/>
</dbReference>
<dbReference type="GO" id="GO:0045259">
    <property type="term" value="C:proton-transporting ATP synthase complex"/>
    <property type="evidence" value="ECO:0007669"/>
    <property type="project" value="UniProtKB-KW"/>
</dbReference>
<dbReference type="GO" id="GO:0043531">
    <property type="term" value="F:ADP binding"/>
    <property type="evidence" value="ECO:0007669"/>
    <property type="project" value="TreeGrafter"/>
</dbReference>
<dbReference type="GO" id="GO:0005524">
    <property type="term" value="F:ATP binding"/>
    <property type="evidence" value="ECO:0007669"/>
    <property type="project" value="UniProtKB-UniRule"/>
</dbReference>
<dbReference type="GO" id="GO:0046933">
    <property type="term" value="F:proton-transporting ATP synthase activity, rotational mechanism"/>
    <property type="evidence" value="ECO:0007669"/>
    <property type="project" value="UniProtKB-UniRule"/>
</dbReference>
<dbReference type="CDD" id="cd18113">
    <property type="entry name" value="ATP-synt_F1_alpha_C"/>
    <property type="match status" value="1"/>
</dbReference>
<dbReference type="CDD" id="cd18116">
    <property type="entry name" value="ATP-synt_F1_alpha_N"/>
    <property type="match status" value="1"/>
</dbReference>
<dbReference type="CDD" id="cd01132">
    <property type="entry name" value="F1-ATPase_alpha_CD"/>
    <property type="match status" value="1"/>
</dbReference>
<dbReference type="FunFam" id="1.20.150.20:FF:000001">
    <property type="entry name" value="ATP synthase subunit alpha"/>
    <property type="match status" value="1"/>
</dbReference>
<dbReference type="FunFam" id="2.40.30.20:FF:000001">
    <property type="entry name" value="ATP synthase subunit alpha"/>
    <property type="match status" value="1"/>
</dbReference>
<dbReference type="FunFam" id="3.40.50.300:FF:000002">
    <property type="entry name" value="ATP synthase subunit alpha"/>
    <property type="match status" value="1"/>
</dbReference>
<dbReference type="Gene3D" id="2.40.30.20">
    <property type="match status" value="1"/>
</dbReference>
<dbReference type="Gene3D" id="1.20.150.20">
    <property type="entry name" value="ATP synthase alpha/beta chain, C-terminal domain"/>
    <property type="match status" value="1"/>
</dbReference>
<dbReference type="Gene3D" id="3.40.50.300">
    <property type="entry name" value="P-loop containing nucleotide triphosphate hydrolases"/>
    <property type="match status" value="1"/>
</dbReference>
<dbReference type="HAMAP" id="MF_01346">
    <property type="entry name" value="ATP_synth_alpha_bact"/>
    <property type="match status" value="1"/>
</dbReference>
<dbReference type="InterPro" id="IPR023366">
    <property type="entry name" value="ATP_synth_asu-like_sf"/>
</dbReference>
<dbReference type="InterPro" id="IPR000793">
    <property type="entry name" value="ATP_synth_asu_C"/>
</dbReference>
<dbReference type="InterPro" id="IPR038376">
    <property type="entry name" value="ATP_synth_asu_C_sf"/>
</dbReference>
<dbReference type="InterPro" id="IPR033732">
    <property type="entry name" value="ATP_synth_F1_a_nt-bd_dom"/>
</dbReference>
<dbReference type="InterPro" id="IPR005294">
    <property type="entry name" value="ATP_synth_F1_asu"/>
</dbReference>
<dbReference type="InterPro" id="IPR020003">
    <property type="entry name" value="ATPase_a/bsu_AS"/>
</dbReference>
<dbReference type="InterPro" id="IPR004100">
    <property type="entry name" value="ATPase_F1/V1/A1_a/bsu_N"/>
</dbReference>
<dbReference type="InterPro" id="IPR036121">
    <property type="entry name" value="ATPase_F1/V1/A1_a/bsu_N_sf"/>
</dbReference>
<dbReference type="InterPro" id="IPR000194">
    <property type="entry name" value="ATPase_F1/V1/A1_a/bsu_nucl-bd"/>
</dbReference>
<dbReference type="InterPro" id="IPR027417">
    <property type="entry name" value="P-loop_NTPase"/>
</dbReference>
<dbReference type="NCBIfam" id="TIGR00962">
    <property type="entry name" value="atpA"/>
    <property type="match status" value="1"/>
</dbReference>
<dbReference type="NCBIfam" id="NF009884">
    <property type="entry name" value="PRK13343.1"/>
    <property type="match status" value="1"/>
</dbReference>
<dbReference type="PANTHER" id="PTHR48082">
    <property type="entry name" value="ATP SYNTHASE SUBUNIT ALPHA, MITOCHONDRIAL"/>
    <property type="match status" value="1"/>
</dbReference>
<dbReference type="PANTHER" id="PTHR48082:SF2">
    <property type="entry name" value="ATP SYNTHASE SUBUNIT ALPHA, MITOCHONDRIAL"/>
    <property type="match status" value="1"/>
</dbReference>
<dbReference type="Pfam" id="PF00006">
    <property type="entry name" value="ATP-synt_ab"/>
    <property type="match status" value="1"/>
</dbReference>
<dbReference type="Pfam" id="PF00306">
    <property type="entry name" value="ATP-synt_ab_C"/>
    <property type="match status" value="1"/>
</dbReference>
<dbReference type="Pfam" id="PF02874">
    <property type="entry name" value="ATP-synt_ab_N"/>
    <property type="match status" value="1"/>
</dbReference>
<dbReference type="PIRSF" id="PIRSF039088">
    <property type="entry name" value="F_ATPase_subunit_alpha"/>
    <property type="match status" value="1"/>
</dbReference>
<dbReference type="SUPFAM" id="SSF47917">
    <property type="entry name" value="C-terminal domain of alpha and beta subunits of F1 ATP synthase"/>
    <property type="match status" value="1"/>
</dbReference>
<dbReference type="SUPFAM" id="SSF50615">
    <property type="entry name" value="N-terminal domain of alpha and beta subunits of F1 ATP synthase"/>
    <property type="match status" value="1"/>
</dbReference>
<dbReference type="SUPFAM" id="SSF52540">
    <property type="entry name" value="P-loop containing nucleoside triphosphate hydrolases"/>
    <property type="match status" value="1"/>
</dbReference>
<dbReference type="PROSITE" id="PS00152">
    <property type="entry name" value="ATPASE_ALPHA_BETA"/>
    <property type="match status" value="1"/>
</dbReference>
<gene>
    <name evidence="1" type="primary">atpA</name>
</gene>
<protein>
    <recommendedName>
        <fullName evidence="1">ATP synthase subunit alpha, chloroplastic</fullName>
        <ecNumber evidence="1">7.1.2.2</ecNumber>
    </recommendedName>
    <alternativeName>
        <fullName evidence="1">ATP synthase F1 sector subunit alpha</fullName>
    </alternativeName>
    <alternativeName>
        <fullName evidence="1">F-ATPase subunit alpha</fullName>
    </alternativeName>
</protein>